<keyword id="KW-0963">Cytoplasm</keyword>
<keyword id="KW-0274">FAD</keyword>
<keyword id="KW-0285">Flavoprotein</keyword>
<keyword id="KW-0489">Methyltransferase</keyword>
<keyword id="KW-0511">Multifunctional enzyme</keyword>
<keyword id="KW-0560">Oxidoreductase</keyword>
<keyword id="KW-0949">S-adenosyl-L-methionine</keyword>
<keyword id="KW-0808">Transferase</keyword>
<keyword id="KW-0819">tRNA processing</keyword>
<gene>
    <name evidence="1" type="primary">mnmC</name>
    <name type="ordered locus">VV1_1985</name>
</gene>
<evidence type="ECO:0000255" key="1">
    <source>
        <dbReference type="HAMAP-Rule" id="MF_01102"/>
    </source>
</evidence>
<accession>Q8DB38</accession>
<protein>
    <recommendedName>
        <fullName evidence="1">tRNA 5-methylaminomethyl-2-thiouridine biosynthesis bifunctional protein MnmC</fullName>
        <shortName evidence="1">tRNA mnm(5)s(2)U biosynthesis bifunctional protein</shortName>
    </recommendedName>
    <domain>
        <recommendedName>
            <fullName evidence="1">tRNA (mnm(5)s(2)U34)-methyltransferase</fullName>
            <ecNumber evidence="1">2.1.1.61</ecNumber>
        </recommendedName>
    </domain>
    <domain>
        <recommendedName>
            <fullName evidence="1">FAD-dependent cmnm(5)s(2)U34 oxidoreductase</fullName>
            <ecNumber evidence="1">1.5.-.-</ecNumber>
        </recommendedName>
    </domain>
</protein>
<dbReference type="EC" id="2.1.1.61" evidence="1"/>
<dbReference type="EC" id="1.5.-.-" evidence="1"/>
<dbReference type="EMBL" id="AE016795">
    <property type="protein sequence ID" value="AAO10385.1"/>
    <property type="molecule type" value="Genomic_DNA"/>
</dbReference>
<dbReference type="RefSeq" id="WP_011079884.1">
    <property type="nucleotide sequence ID" value="NC_004459.3"/>
</dbReference>
<dbReference type="SMR" id="Q8DB38"/>
<dbReference type="KEGG" id="vvu:VV1_1985"/>
<dbReference type="HOGENOM" id="CLU_022427_2_1_6"/>
<dbReference type="Proteomes" id="UP000002275">
    <property type="component" value="Chromosome 1"/>
</dbReference>
<dbReference type="GO" id="GO:0005737">
    <property type="term" value="C:cytoplasm"/>
    <property type="evidence" value="ECO:0007669"/>
    <property type="project" value="UniProtKB-SubCell"/>
</dbReference>
<dbReference type="GO" id="GO:0050660">
    <property type="term" value="F:flavin adenine dinucleotide binding"/>
    <property type="evidence" value="ECO:0007669"/>
    <property type="project" value="UniProtKB-UniRule"/>
</dbReference>
<dbReference type="GO" id="GO:0016645">
    <property type="term" value="F:oxidoreductase activity, acting on the CH-NH group of donors"/>
    <property type="evidence" value="ECO:0007669"/>
    <property type="project" value="InterPro"/>
</dbReference>
<dbReference type="GO" id="GO:0004808">
    <property type="term" value="F:tRNA (5-methylaminomethyl-2-thiouridylate)(34)-methyltransferase activity"/>
    <property type="evidence" value="ECO:0007669"/>
    <property type="project" value="UniProtKB-EC"/>
</dbReference>
<dbReference type="GO" id="GO:0032259">
    <property type="term" value="P:methylation"/>
    <property type="evidence" value="ECO:0007669"/>
    <property type="project" value="UniProtKB-KW"/>
</dbReference>
<dbReference type="GO" id="GO:0002098">
    <property type="term" value="P:tRNA wobble uridine modification"/>
    <property type="evidence" value="ECO:0007669"/>
    <property type="project" value="TreeGrafter"/>
</dbReference>
<dbReference type="FunFam" id="3.40.50.150:FF:000107">
    <property type="entry name" value="tRNA 5-methylaminomethyl-2-thiouridine biosynthesis bifunctional protein MnmC"/>
    <property type="match status" value="1"/>
</dbReference>
<dbReference type="Gene3D" id="3.30.9.10">
    <property type="entry name" value="D-Amino Acid Oxidase, subunit A, domain 2"/>
    <property type="match status" value="1"/>
</dbReference>
<dbReference type="Gene3D" id="3.50.50.60">
    <property type="entry name" value="FAD/NAD(P)-binding domain"/>
    <property type="match status" value="1"/>
</dbReference>
<dbReference type="Gene3D" id="3.40.50.150">
    <property type="entry name" value="Vaccinia Virus protein VP39"/>
    <property type="match status" value="1"/>
</dbReference>
<dbReference type="HAMAP" id="MF_01102">
    <property type="entry name" value="MnmC"/>
    <property type="match status" value="1"/>
</dbReference>
<dbReference type="InterPro" id="IPR006076">
    <property type="entry name" value="FAD-dep_OxRdtase"/>
</dbReference>
<dbReference type="InterPro" id="IPR036188">
    <property type="entry name" value="FAD/NAD-bd_sf"/>
</dbReference>
<dbReference type="InterPro" id="IPR008471">
    <property type="entry name" value="MnmC-like_methylTransf"/>
</dbReference>
<dbReference type="InterPro" id="IPR029063">
    <property type="entry name" value="SAM-dependent_MTases_sf"/>
</dbReference>
<dbReference type="InterPro" id="IPR023032">
    <property type="entry name" value="tRNA_MAMT_biosynth_bifunc_MnmC"/>
</dbReference>
<dbReference type="InterPro" id="IPR047785">
    <property type="entry name" value="tRNA_MNMC2"/>
</dbReference>
<dbReference type="InterPro" id="IPR017610">
    <property type="entry name" value="tRNA_S-uridine_synth_MnmC_C"/>
</dbReference>
<dbReference type="NCBIfam" id="TIGR03197">
    <property type="entry name" value="MnmC_Cterm"/>
    <property type="match status" value="1"/>
</dbReference>
<dbReference type="NCBIfam" id="NF002481">
    <property type="entry name" value="PRK01747.1-2"/>
    <property type="match status" value="1"/>
</dbReference>
<dbReference type="NCBIfam" id="NF002484">
    <property type="entry name" value="PRK01747.1-5"/>
    <property type="match status" value="1"/>
</dbReference>
<dbReference type="NCBIfam" id="NF033855">
    <property type="entry name" value="tRNA_MNMC2"/>
    <property type="match status" value="1"/>
</dbReference>
<dbReference type="PANTHER" id="PTHR13847">
    <property type="entry name" value="SARCOSINE DEHYDROGENASE-RELATED"/>
    <property type="match status" value="1"/>
</dbReference>
<dbReference type="PANTHER" id="PTHR13847:SF283">
    <property type="entry name" value="TRNA 5-METHYLAMINOMETHYL-2-THIOURIDINE BIOSYNTHESIS BIFUNCTIONAL PROTEIN MNMC"/>
    <property type="match status" value="1"/>
</dbReference>
<dbReference type="Pfam" id="PF01266">
    <property type="entry name" value="DAO"/>
    <property type="match status" value="1"/>
</dbReference>
<dbReference type="Pfam" id="PF05430">
    <property type="entry name" value="Methyltransf_30"/>
    <property type="match status" value="1"/>
</dbReference>
<dbReference type="SUPFAM" id="SSF51905">
    <property type="entry name" value="FAD/NAD(P)-binding domain"/>
    <property type="match status" value="1"/>
</dbReference>
<name>MNMC_VIBVU</name>
<proteinExistence type="inferred from homology"/>
<comment type="function">
    <text evidence="1">Catalyzes the last two steps in the biosynthesis of 5-methylaminomethyl-2-thiouridine (mnm(5)s(2)U) at the wobble position (U34) in tRNA. Catalyzes the FAD-dependent demodification of cmnm(5)s(2)U34 to nm(5)s(2)U34, followed by the transfer of a methyl group from S-adenosyl-L-methionine to nm(5)s(2)U34, to form mnm(5)s(2)U34.</text>
</comment>
<comment type="catalytic activity">
    <reaction evidence="1">
        <text>5-aminomethyl-2-thiouridine(34) in tRNA + S-adenosyl-L-methionine = 5-methylaminomethyl-2-thiouridine(34) in tRNA + S-adenosyl-L-homocysteine + H(+)</text>
        <dbReference type="Rhea" id="RHEA:19569"/>
        <dbReference type="Rhea" id="RHEA-COMP:10195"/>
        <dbReference type="Rhea" id="RHEA-COMP:10197"/>
        <dbReference type="ChEBI" id="CHEBI:15378"/>
        <dbReference type="ChEBI" id="CHEBI:57856"/>
        <dbReference type="ChEBI" id="CHEBI:59789"/>
        <dbReference type="ChEBI" id="CHEBI:74454"/>
        <dbReference type="ChEBI" id="CHEBI:74455"/>
        <dbReference type="EC" id="2.1.1.61"/>
    </reaction>
</comment>
<comment type="cofactor">
    <cofactor evidence="1">
        <name>FAD</name>
        <dbReference type="ChEBI" id="CHEBI:57692"/>
    </cofactor>
</comment>
<comment type="subcellular location">
    <subcellularLocation>
        <location evidence="1">Cytoplasm</location>
    </subcellularLocation>
</comment>
<comment type="similarity">
    <text evidence="1">In the N-terminal section; belongs to the methyltransferase superfamily. tRNA (mnm(5)s(2)U34)-methyltransferase family.</text>
</comment>
<comment type="similarity">
    <text evidence="1">In the C-terminal section; belongs to the DAO family.</text>
</comment>
<feature type="chain" id="PRO_0000095031" description="tRNA 5-methylaminomethyl-2-thiouridine biosynthesis bifunctional protein MnmC">
    <location>
        <begin position="1"/>
        <end position="672"/>
    </location>
</feature>
<feature type="region of interest" description="tRNA (mnm(5)s(2)U34)-methyltransferase">
    <location>
        <begin position="1"/>
        <end position="243"/>
    </location>
</feature>
<feature type="region of interest" description="FAD-dependent cmnm(5)s(2)U34 oxidoreductase">
    <location>
        <begin position="269"/>
        <end position="672"/>
    </location>
</feature>
<reference key="1">
    <citation type="submission" date="2002-12" db="EMBL/GenBank/DDBJ databases">
        <title>Complete genome sequence of Vibrio vulnificus CMCP6.</title>
        <authorList>
            <person name="Rhee J.H."/>
            <person name="Kim S.Y."/>
            <person name="Chung S.S."/>
            <person name="Kim J.J."/>
            <person name="Moon Y.H."/>
            <person name="Jeong H."/>
            <person name="Choy H.E."/>
        </authorList>
    </citation>
    <scope>NUCLEOTIDE SEQUENCE [LARGE SCALE GENOMIC DNA]</scope>
    <source>
        <strain>CMCP6</strain>
    </source>
</reference>
<organism>
    <name type="scientific">Vibrio vulnificus (strain CMCP6)</name>
    <dbReference type="NCBI Taxonomy" id="216895"/>
    <lineage>
        <taxon>Bacteria</taxon>
        <taxon>Pseudomonadati</taxon>
        <taxon>Pseudomonadota</taxon>
        <taxon>Gammaproteobacteria</taxon>
        <taxon>Vibrionales</taxon>
        <taxon>Vibrionaceae</taxon>
        <taxon>Vibrio</taxon>
    </lineage>
</organism>
<sequence length="672" mass="74967">MTSITHAELGWNEVGTPVSDQFDDVYFSNVNGLEETRYVFLKQNLIPERWQEFDRRRFVIGETGFGTGLNFLAVWQAFNDFRRANPDATLKELHFVSFEKFPLSKQDLIKAHQAWPELAELAEKLHRHYPPAVPECHRIVLDNGAVTLDLWLGDIKDCLPSVPYGEEGIIDTWFLDGFAPSKNPEMWNQDLFNGMAKLARSECRVATFTSAGFVRRGLIEAGFAMKKVKGFGTKREMIAGCMETRQQQSRHAPYFNRTSASHLDSIAIIGGGIASAALAKALVQRGQKVTLYCKHAQAAEGASGNRQGAVYPLLNGNHDGVSRVFAPAFLFARQFVEQAAQALTFDHDWCGVTQLMWDEKSTNKLDKMLSGNFAPELIQKLSVGETAAKIGLPIDMASVHYPLGGWLCPAELTQALFTQLGTLDNFTAKFEQSVEQLIWDERSQQWQVHTQGQHDTYSAVVIANGHEFQTFSQTADIPLGQVKGQVSHVPATETLSKLKSVLCYDGYMTPVNPNNQHLCIGASYDRRHLDTEFDVNAQQENAERLTQCVPNQAWAKEVDTSGNLSRQGIRCVSRDHLPFVGNVGDFSAIKRQYADLPHTQAEEIEVISQFPNLFCLLGLGSRGLSSAPLMAELLASQICNDPLPLPVDVLEELHPSRMWVRKLRKGKAITEL</sequence>